<name>HYD2_GIBMO</name>
<gene>
    <name evidence="5" type="primary">HYD2</name>
</gene>
<comment type="function">
    <text evidence="3 7">Aerial growth, conidiation, and dispersal of filamentous fungi in the environment rely upon a capability of their secreting small amphipathic proteins called hydrophobins (HPBs) with low sequence identity. Class I can self-assemble into an outermost layer of rodlet bundles on aerial cell surfaces, conferring cellular hydrophobicity that supports fungal growth, development and dispersal; whereas Class II form highly ordered films at water-air interfaces through intermolecular interactions but contribute nothing to the rodlet structure (Probable). HYD1 and HYD2 are required for the structural integrity of the long aerial chains of microconidia (PubMed:15288021). Does not seem to be important for the ability to cause seedling disease (PubMed:15288021).</text>
</comment>
<comment type="subcellular location">
    <subcellularLocation>
        <location evidence="3">Secreted</location>
    </subcellularLocation>
    <subcellularLocation>
        <location evidence="3">Secreted</location>
        <location evidence="3">Cell wall</location>
    </subcellularLocation>
    <text evidence="3">Localizes to the outside of conidia, and more particularly to the junctions of individual microconidia.</text>
</comment>
<comment type="induction">
    <text evidence="4">Expression is positively regulated by the cAMP-protein kinase A (PKA) pathway and more specifically by the adenylate cyclase FAC1. In contrast, deletion of PKA catalytitic subunit CPK1 has no obvious effect on the expression of HYD2.</text>
</comment>
<comment type="disruption phenotype">
    <text evidence="3">Does not affect pathogenicity in a corn seedling infection assay nor the production of microconidia, but affects microconidial chain formation.</text>
</comment>
<comment type="similarity">
    <text evidence="6">Belongs to the fungal hydrophobin family.</text>
</comment>
<feature type="signal peptide" evidence="2">
    <location>
        <begin position="1"/>
        <end position="16"/>
    </location>
</feature>
<feature type="chain" id="PRO_5013985528" description="Class I hydrophobin 2">
    <location>
        <begin position="17"/>
        <end position="123"/>
    </location>
</feature>
<feature type="disulfide bond" evidence="1">
    <location>
        <begin position="35"/>
        <end position="97"/>
    </location>
</feature>
<feature type="disulfide bond" evidence="1">
    <location>
        <begin position="43"/>
        <end position="91"/>
    </location>
</feature>
<feature type="disulfide bond" evidence="1">
    <location>
        <begin position="44"/>
        <end position="72"/>
    </location>
</feature>
<feature type="disulfide bond" evidence="1">
    <location>
        <begin position="98"/>
        <end position="116"/>
    </location>
</feature>
<reference key="1">
    <citation type="journal article" date="2004" name="Fungal Genet. Biol.">
        <title>Five hydrophobin genes in Fusarium verticillioides include two required for microconidial chain formation.</title>
        <authorList>
            <person name="Fuchs U."/>
            <person name="Czymmek K.J."/>
            <person name="Sweigard J.A."/>
        </authorList>
    </citation>
    <scope>NUCLEOTIDE SEQUENCE [GENOMIC DNA]</scope>
    <scope>FUNCTION</scope>
    <scope>DISRUPTION PHENOTYPE</scope>
    <scope>SUBCELLULAR LOCATION</scope>
    <source>
        <strain>M-3125</strain>
    </source>
</reference>
<reference key="2">
    <citation type="journal article" date="2010" name="Mol. Plant Microbe Interact.">
        <title>The cAMP signaling pathway in Fusarium verticillioides is important for conidiation, plant infection, and stress responses but not fumonisin production.</title>
        <authorList>
            <person name="Choi Y.E."/>
            <person name="Xu J.R."/>
        </authorList>
    </citation>
    <scope>INDUCTION</scope>
</reference>
<evidence type="ECO:0000250" key="1">
    <source>
        <dbReference type="UniProtKB" id="P52754"/>
    </source>
</evidence>
<evidence type="ECO:0000255" key="2"/>
<evidence type="ECO:0000269" key="3">
    <source>
    </source>
</evidence>
<evidence type="ECO:0000269" key="4">
    <source>
    </source>
</evidence>
<evidence type="ECO:0000303" key="5">
    <source>
    </source>
</evidence>
<evidence type="ECO:0000305" key="6"/>
<evidence type="ECO:0000305" key="7">
    <source>
    </source>
</evidence>
<proteinExistence type="evidence at transcript level"/>
<organism>
    <name type="scientific">Gibberella moniliformis</name>
    <name type="common">Maize ear and stalk rot fungus</name>
    <name type="synonym">Fusarium verticillioides</name>
    <dbReference type="NCBI Taxonomy" id="117187"/>
    <lineage>
        <taxon>Eukaryota</taxon>
        <taxon>Fungi</taxon>
        <taxon>Dikarya</taxon>
        <taxon>Ascomycota</taxon>
        <taxon>Pezizomycotina</taxon>
        <taxon>Sordariomycetes</taxon>
        <taxon>Hypocreomycetidae</taxon>
        <taxon>Hypocreales</taxon>
        <taxon>Nectriaceae</taxon>
        <taxon>Fusarium</taxon>
        <taxon>Fusarium fujikuroi species complex</taxon>
    </lineage>
</organism>
<accession>Q6YF31</accession>
<sequence>MYAYTVIAFLAASVAAAGNGPSISSLTVQQAANSCANGQSVYCCNKTSNKPAGNSVGDGAGIANGLSLFSQCSKVDVNVIAIANNLLNKECQANAACCQDSPGTAAAGLVNAALPCVAISNLV</sequence>
<dbReference type="EMBL" id="AY155497">
    <property type="protein sequence ID" value="AAO16868.1"/>
    <property type="molecule type" value="Genomic_DNA"/>
</dbReference>
<dbReference type="GO" id="GO:0005576">
    <property type="term" value="C:extracellular region"/>
    <property type="evidence" value="ECO:0007669"/>
    <property type="project" value="UniProtKB-KW"/>
</dbReference>
<dbReference type="GO" id="GO:0009277">
    <property type="term" value="C:fungal-type cell wall"/>
    <property type="evidence" value="ECO:0007669"/>
    <property type="project" value="InterPro"/>
</dbReference>
<dbReference type="GO" id="GO:0005199">
    <property type="term" value="F:structural constituent of cell wall"/>
    <property type="evidence" value="ECO:0007669"/>
    <property type="project" value="InterPro"/>
</dbReference>
<dbReference type="InterPro" id="IPR001338">
    <property type="entry name" value="Hydrophobin"/>
</dbReference>
<dbReference type="Pfam" id="PF01185">
    <property type="entry name" value="Hydrophobin"/>
    <property type="match status" value="1"/>
</dbReference>
<dbReference type="SMART" id="SM00075">
    <property type="entry name" value="HYDRO"/>
    <property type="match status" value="1"/>
</dbReference>
<protein>
    <recommendedName>
        <fullName evidence="5">Class I hydrophobin 2</fullName>
    </recommendedName>
</protein>
<keyword id="KW-0134">Cell wall</keyword>
<keyword id="KW-1015">Disulfide bond</keyword>
<keyword id="KW-0964">Secreted</keyword>
<keyword id="KW-0732">Signal</keyword>
<keyword id="KW-0749">Sporulation</keyword>